<gene>
    <name evidence="1" type="primary">pyrB</name>
    <name type="ordered locus">Ccon26_12770</name>
    <name type="ORF">CCC13826_2039</name>
</gene>
<evidence type="ECO:0000255" key="1">
    <source>
        <dbReference type="HAMAP-Rule" id="MF_00001"/>
    </source>
</evidence>
<sequence>MGYKHKDLIGTRELSKEEILYFLEAAKEFKELNLSQVKKNDYLRGKTTINAFYENSTRTRTSFEIAAKRLGADTINFSSSNSSVTKGESLNDTMNNMAAMRTDIIVLRHPSSGAAKFAADRTEASVVNAGDGTNEHPSQALLDLFTLREHGKILDKNLNVAIIGDIARSRVARSDIWAMKKFGINLKLFAPRMMMPKDAEVFESQICKNMEEACEGSDVIIMLRIQLERGGADVAFPSSREYSKFFGLNKNRIKLAKPDAIVLHPGPINRGVELNSDVADGTHSVILNQVENGVAIRMAILNTLAKNRG</sequence>
<accession>A7ZEC2</accession>
<proteinExistence type="inferred from homology"/>
<reference key="1">
    <citation type="submission" date="2007-10" db="EMBL/GenBank/DDBJ databases">
        <title>Genome sequence of Campylobacter concisus 13826 isolated from human feces.</title>
        <authorList>
            <person name="Fouts D.E."/>
            <person name="Mongodin E.F."/>
            <person name="Puiu D."/>
            <person name="Sebastian Y."/>
            <person name="Miller W.G."/>
            <person name="Mandrell R.E."/>
            <person name="On S."/>
            <person name="Nelson K.E."/>
        </authorList>
    </citation>
    <scope>NUCLEOTIDE SEQUENCE [LARGE SCALE GENOMIC DNA]</scope>
    <source>
        <strain>13826</strain>
    </source>
</reference>
<comment type="function">
    <text evidence="1">Catalyzes the condensation of carbamoyl phosphate and aspartate to form carbamoyl aspartate and inorganic phosphate, the committed step in the de novo pyrimidine nucleotide biosynthesis pathway.</text>
</comment>
<comment type="catalytic activity">
    <reaction evidence="1">
        <text>carbamoyl phosphate + L-aspartate = N-carbamoyl-L-aspartate + phosphate + H(+)</text>
        <dbReference type="Rhea" id="RHEA:20013"/>
        <dbReference type="ChEBI" id="CHEBI:15378"/>
        <dbReference type="ChEBI" id="CHEBI:29991"/>
        <dbReference type="ChEBI" id="CHEBI:32814"/>
        <dbReference type="ChEBI" id="CHEBI:43474"/>
        <dbReference type="ChEBI" id="CHEBI:58228"/>
        <dbReference type="EC" id="2.1.3.2"/>
    </reaction>
</comment>
<comment type="pathway">
    <text evidence="1">Pyrimidine metabolism; UMP biosynthesis via de novo pathway; (S)-dihydroorotate from bicarbonate: step 2/3.</text>
</comment>
<comment type="subunit">
    <text evidence="1">Heterododecamer (2C3:3R2) of six catalytic PyrB chains organized as two trimers (C3), and six regulatory PyrI chains organized as three dimers (R2).</text>
</comment>
<comment type="similarity">
    <text evidence="1">Belongs to the aspartate/ornithine carbamoyltransferase superfamily. ATCase family.</text>
</comment>
<feature type="chain" id="PRO_0000321083" description="Aspartate carbamoyltransferase catalytic subunit">
    <location>
        <begin position="1"/>
        <end position="309"/>
    </location>
</feature>
<feature type="binding site" evidence="1">
    <location>
        <position position="58"/>
    </location>
    <ligand>
        <name>carbamoyl phosphate</name>
        <dbReference type="ChEBI" id="CHEBI:58228"/>
    </ligand>
</feature>
<feature type="binding site" evidence="1">
    <location>
        <position position="59"/>
    </location>
    <ligand>
        <name>carbamoyl phosphate</name>
        <dbReference type="ChEBI" id="CHEBI:58228"/>
    </ligand>
</feature>
<feature type="binding site" evidence="1">
    <location>
        <position position="86"/>
    </location>
    <ligand>
        <name>L-aspartate</name>
        <dbReference type="ChEBI" id="CHEBI:29991"/>
    </ligand>
</feature>
<feature type="binding site" evidence="1">
    <location>
        <position position="108"/>
    </location>
    <ligand>
        <name>carbamoyl phosphate</name>
        <dbReference type="ChEBI" id="CHEBI:58228"/>
    </ligand>
</feature>
<feature type="binding site" evidence="1">
    <location>
        <position position="136"/>
    </location>
    <ligand>
        <name>carbamoyl phosphate</name>
        <dbReference type="ChEBI" id="CHEBI:58228"/>
    </ligand>
</feature>
<feature type="binding site" evidence="1">
    <location>
        <position position="139"/>
    </location>
    <ligand>
        <name>carbamoyl phosphate</name>
        <dbReference type="ChEBI" id="CHEBI:58228"/>
    </ligand>
</feature>
<feature type="binding site" evidence="1">
    <location>
        <position position="170"/>
    </location>
    <ligand>
        <name>L-aspartate</name>
        <dbReference type="ChEBI" id="CHEBI:29991"/>
    </ligand>
</feature>
<feature type="binding site" evidence="1">
    <location>
        <position position="224"/>
    </location>
    <ligand>
        <name>L-aspartate</name>
        <dbReference type="ChEBI" id="CHEBI:29991"/>
    </ligand>
</feature>
<feature type="binding site" evidence="1">
    <location>
        <position position="266"/>
    </location>
    <ligand>
        <name>carbamoyl phosphate</name>
        <dbReference type="ChEBI" id="CHEBI:58228"/>
    </ligand>
</feature>
<feature type="binding site" evidence="1">
    <location>
        <position position="267"/>
    </location>
    <ligand>
        <name>carbamoyl phosphate</name>
        <dbReference type="ChEBI" id="CHEBI:58228"/>
    </ligand>
</feature>
<protein>
    <recommendedName>
        <fullName evidence="1">Aspartate carbamoyltransferase catalytic subunit</fullName>
        <ecNumber evidence="1">2.1.3.2</ecNumber>
    </recommendedName>
    <alternativeName>
        <fullName evidence="1">Aspartate transcarbamylase</fullName>
        <shortName evidence="1">ATCase</shortName>
    </alternativeName>
</protein>
<organism>
    <name type="scientific">Campylobacter concisus (strain 13826)</name>
    <dbReference type="NCBI Taxonomy" id="360104"/>
    <lineage>
        <taxon>Bacteria</taxon>
        <taxon>Pseudomonadati</taxon>
        <taxon>Campylobacterota</taxon>
        <taxon>Epsilonproteobacteria</taxon>
        <taxon>Campylobacterales</taxon>
        <taxon>Campylobacteraceae</taxon>
        <taxon>Campylobacter</taxon>
    </lineage>
</organism>
<name>PYRB_CAMC1</name>
<dbReference type="EC" id="2.1.3.2" evidence="1"/>
<dbReference type="EMBL" id="CP000792">
    <property type="protein sequence ID" value="EAT98704.2"/>
    <property type="molecule type" value="Genomic_DNA"/>
</dbReference>
<dbReference type="RefSeq" id="WP_012140044.1">
    <property type="nucleotide sequence ID" value="NC_009802.2"/>
</dbReference>
<dbReference type="SMR" id="A7ZEC2"/>
<dbReference type="STRING" id="360104.CCC13826_2039"/>
<dbReference type="KEGG" id="cco:CCC13826_2039"/>
<dbReference type="eggNOG" id="COG0540">
    <property type="taxonomic scope" value="Bacteria"/>
</dbReference>
<dbReference type="HOGENOM" id="CLU_043846_2_0_7"/>
<dbReference type="OrthoDB" id="9774690at2"/>
<dbReference type="UniPathway" id="UPA00070">
    <property type="reaction ID" value="UER00116"/>
</dbReference>
<dbReference type="Proteomes" id="UP000001121">
    <property type="component" value="Chromosome"/>
</dbReference>
<dbReference type="GO" id="GO:0005829">
    <property type="term" value="C:cytosol"/>
    <property type="evidence" value="ECO:0007669"/>
    <property type="project" value="TreeGrafter"/>
</dbReference>
<dbReference type="GO" id="GO:0016597">
    <property type="term" value="F:amino acid binding"/>
    <property type="evidence" value="ECO:0007669"/>
    <property type="project" value="InterPro"/>
</dbReference>
<dbReference type="GO" id="GO:0004070">
    <property type="term" value="F:aspartate carbamoyltransferase activity"/>
    <property type="evidence" value="ECO:0007669"/>
    <property type="project" value="UniProtKB-UniRule"/>
</dbReference>
<dbReference type="GO" id="GO:0006207">
    <property type="term" value="P:'de novo' pyrimidine nucleobase biosynthetic process"/>
    <property type="evidence" value="ECO:0007669"/>
    <property type="project" value="InterPro"/>
</dbReference>
<dbReference type="GO" id="GO:0044205">
    <property type="term" value="P:'de novo' UMP biosynthetic process"/>
    <property type="evidence" value="ECO:0007669"/>
    <property type="project" value="UniProtKB-UniRule"/>
</dbReference>
<dbReference type="GO" id="GO:0006520">
    <property type="term" value="P:amino acid metabolic process"/>
    <property type="evidence" value="ECO:0007669"/>
    <property type="project" value="InterPro"/>
</dbReference>
<dbReference type="Gene3D" id="3.40.50.1370">
    <property type="entry name" value="Aspartate/ornithine carbamoyltransferase"/>
    <property type="match status" value="2"/>
</dbReference>
<dbReference type="HAMAP" id="MF_00001">
    <property type="entry name" value="Asp_carb_tr"/>
    <property type="match status" value="1"/>
</dbReference>
<dbReference type="InterPro" id="IPR006132">
    <property type="entry name" value="Asp/Orn_carbamoyltranf_P-bd"/>
</dbReference>
<dbReference type="InterPro" id="IPR006130">
    <property type="entry name" value="Asp/Orn_carbamoylTrfase"/>
</dbReference>
<dbReference type="InterPro" id="IPR036901">
    <property type="entry name" value="Asp/Orn_carbamoylTrfase_sf"/>
</dbReference>
<dbReference type="InterPro" id="IPR002082">
    <property type="entry name" value="Asp_carbamoyltransf"/>
</dbReference>
<dbReference type="InterPro" id="IPR006131">
    <property type="entry name" value="Asp_carbamoyltransf_Asp/Orn-bd"/>
</dbReference>
<dbReference type="NCBIfam" id="TIGR00670">
    <property type="entry name" value="asp_carb_tr"/>
    <property type="match status" value="1"/>
</dbReference>
<dbReference type="NCBIfam" id="NF002032">
    <property type="entry name" value="PRK00856.1"/>
    <property type="match status" value="1"/>
</dbReference>
<dbReference type="PANTHER" id="PTHR45753:SF6">
    <property type="entry name" value="ASPARTATE CARBAMOYLTRANSFERASE"/>
    <property type="match status" value="1"/>
</dbReference>
<dbReference type="PANTHER" id="PTHR45753">
    <property type="entry name" value="ORNITHINE CARBAMOYLTRANSFERASE, MITOCHONDRIAL"/>
    <property type="match status" value="1"/>
</dbReference>
<dbReference type="Pfam" id="PF00185">
    <property type="entry name" value="OTCace"/>
    <property type="match status" value="1"/>
</dbReference>
<dbReference type="Pfam" id="PF02729">
    <property type="entry name" value="OTCace_N"/>
    <property type="match status" value="1"/>
</dbReference>
<dbReference type="PRINTS" id="PR00100">
    <property type="entry name" value="AOTCASE"/>
</dbReference>
<dbReference type="PRINTS" id="PR00101">
    <property type="entry name" value="ATCASE"/>
</dbReference>
<dbReference type="SUPFAM" id="SSF53671">
    <property type="entry name" value="Aspartate/ornithine carbamoyltransferase"/>
    <property type="match status" value="1"/>
</dbReference>
<dbReference type="PROSITE" id="PS00097">
    <property type="entry name" value="CARBAMOYLTRANSFERASE"/>
    <property type="match status" value="1"/>
</dbReference>
<keyword id="KW-0665">Pyrimidine biosynthesis</keyword>
<keyword id="KW-0808">Transferase</keyword>